<proteinExistence type="evidence at protein level"/>
<accession>Q5T4D3</accession>
<accession>A6NLI7</accession>
<accession>B7Z666</accession>
<accession>Q5T4D4</accession>
<accession>Q5T4D5</accession>
<accession>Q5T4D6</accession>
<accession>Q8WV63</accession>
<accession>Q96SU8</accession>
<feature type="chain" id="PRO_0000280295" description="Protein O-mannosyl-transferase TMTC4">
    <location>
        <begin position="1"/>
        <end position="741"/>
    </location>
</feature>
<feature type="topological domain" description="Cytoplasmic" evidence="9">
    <location>
        <begin position="1"/>
        <end position="14"/>
    </location>
</feature>
<feature type="transmembrane region" description="Helical" evidence="1">
    <location>
        <begin position="15"/>
        <end position="35"/>
    </location>
</feature>
<feature type="topological domain" description="Extracellular" evidence="9">
    <location>
        <begin position="36"/>
        <end position="111"/>
    </location>
</feature>
<feature type="transmembrane region" description="Helical" evidence="1">
    <location>
        <begin position="112"/>
        <end position="132"/>
    </location>
</feature>
<feature type="topological domain" description="Cytoplasmic" evidence="9">
    <location>
        <begin position="133"/>
        <end position="141"/>
    </location>
</feature>
<feature type="transmembrane region" description="Helical" evidence="1">
    <location>
        <begin position="142"/>
        <end position="162"/>
    </location>
</feature>
<feature type="topological domain" description="Extracellular" evidence="9">
    <location>
        <begin position="163"/>
        <end position="165"/>
    </location>
</feature>
<feature type="transmembrane region" description="Helical" evidence="1">
    <location>
        <begin position="166"/>
        <end position="186"/>
    </location>
</feature>
<feature type="topological domain" description="Cytoplasmic" evidence="9">
    <location>
        <begin position="187"/>
        <end position="198"/>
    </location>
</feature>
<feature type="transmembrane region" description="Helical" evidence="1">
    <location>
        <begin position="199"/>
        <end position="219"/>
    </location>
</feature>
<feature type="topological domain" description="Extracellular" evidence="9">
    <location>
        <begin position="220"/>
        <end position="224"/>
    </location>
</feature>
<feature type="transmembrane region" description="Helical" evidence="1">
    <location>
        <begin position="225"/>
        <end position="245"/>
    </location>
</feature>
<feature type="topological domain" description="Cytoplasmic" evidence="9">
    <location>
        <begin position="246"/>
        <end position="268"/>
    </location>
</feature>
<feature type="transmembrane region" description="Helical" evidence="1">
    <location>
        <begin position="269"/>
        <end position="288"/>
    </location>
</feature>
<feature type="topological domain" description="Extracellular" evidence="9">
    <location>
        <begin position="289"/>
        <end position="354"/>
    </location>
</feature>
<feature type="transmembrane region" description="Helical" evidence="1">
    <location>
        <begin position="355"/>
        <end position="375"/>
    </location>
</feature>
<feature type="topological domain" description="Cytoplasmic" evidence="9">
    <location>
        <begin position="376"/>
        <end position="382"/>
    </location>
</feature>
<feature type="transmembrane region" description="Helical" evidence="1">
    <location>
        <begin position="383"/>
        <end position="403"/>
    </location>
</feature>
<feature type="topological domain" description="Extracellular" evidence="9">
    <location>
        <begin position="404"/>
        <end position="412"/>
    </location>
</feature>
<feature type="transmembrane region" description="Helical" evidence="1">
    <location>
        <begin position="413"/>
        <end position="433"/>
    </location>
</feature>
<feature type="topological domain" description="Cytoplasmic" evidence="9">
    <location>
        <begin position="434"/>
        <end position="440"/>
    </location>
</feature>
<feature type="transmembrane region" description="Helical" evidence="1">
    <location>
        <begin position="441"/>
        <end position="461"/>
    </location>
</feature>
<feature type="topological domain" description="Extracellular" evidence="9">
    <location>
        <begin position="462"/>
        <end position="741"/>
    </location>
</feature>
<feature type="repeat" description="TPR 1" evidence="2">
    <location>
        <begin position="482"/>
        <end position="515"/>
    </location>
</feature>
<feature type="repeat" description="TPR 2" evidence="2">
    <location>
        <begin position="516"/>
        <end position="549"/>
    </location>
</feature>
<feature type="repeat" description="TPR 3" evidence="2">
    <location>
        <begin position="550"/>
        <end position="583"/>
    </location>
</feature>
<feature type="repeat" description="TPR 4" evidence="2">
    <location>
        <begin position="584"/>
        <end position="617"/>
    </location>
</feature>
<feature type="repeat" description="TPR 5" evidence="2">
    <location>
        <begin position="618"/>
        <end position="651"/>
    </location>
</feature>
<feature type="repeat" description="TPR 6" evidence="2">
    <location>
        <begin position="652"/>
        <end position="685"/>
    </location>
</feature>
<feature type="repeat" description="TPR 7" evidence="2">
    <location>
        <begin position="686"/>
        <end position="719"/>
    </location>
</feature>
<feature type="glycosylation site" description="N-linked (GlcNAc...) asparagine" evidence="3">
    <location>
        <position position="78"/>
    </location>
</feature>
<feature type="glycosylation site" description="N-linked (GlcNAc...) asparagine" evidence="3">
    <location>
        <position position="497"/>
    </location>
</feature>
<feature type="glycosylation site" description="N-linked (GlcNAc...) asparagine" evidence="3">
    <location>
        <position position="609"/>
    </location>
</feature>
<feature type="splice variant" id="VSP_038261" description="In isoform 3." evidence="7">
    <original>M</original>
    <variation>MIPNQHNAGAGSHQPAVFRM</variation>
    <location>
        <position position="1"/>
    </location>
</feature>
<feature type="splice variant" id="VSP_054873" description="In isoform 4." evidence="7">
    <location>
        <begin position="55"/>
        <end position="165"/>
    </location>
</feature>
<feature type="splice variant" id="VSP_023622" description="In isoform 2." evidence="8">
    <original>YADLNRHVDALNAWRNATV</original>
    <variation>VSAGCPVPVEGKMGYFSYL</variation>
    <location>
        <begin position="594"/>
        <end position="612"/>
    </location>
</feature>
<feature type="splice variant" id="VSP_023623" description="In isoform 2." evidence="8">
    <location>
        <begin position="613"/>
        <end position="741"/>
    </location>
</feature>
<feature type="sequence variant" id="VAR_089354" description="In DFNB122; uncertain significance; dbSNP:rs770073741." evidence="6">
    <original>E</original>
    <variation>K</variation>
    <location>
        <position position="164"/>
    </location>
</feature>
<feature type="sequence variant" id="VAR_089355" description="In DFNB122; uncertain significance; dbSNP:rs1364085211." evidence="6">
    <original>A</original>
    <variation>V</variation>
    <location>
        <position position="173"/>
    </location>
</feature>
<feature type="sequence variant" id="VAR_031117" description="In dbSNP:rs3809371.">
    <original>V</original>
    <variation>M</variation>
    <location>
        <position position="286"/>
    </location>
</feature>
<feature type="sequence variant" id="VAR_031118" description="In dbSNP:rs946837.">
    <original>V</original>
    <variation>I</variation>
    <location>
        <position position="419"/>
    </location>
</feature>
<feature type="sequence variant" id="VAR_036455" description="In a breast cancer sample; somatic mutation; dbSNP:rs144940475." evidence="4">
    <original>M</original>
    <variation>V</variation>
    <location>
        <position position="655"/>
    </location>
</feature>
<feature type="sequence conflict" description="In Ref. 1; BAB55179." evidence="9" ref="1">
    <original>L</original>
    <variation>P</variation>
    <location>
        <position position="441"/>
    </location>
</feature>
<feature type="sequence conflict" description="In Ref. 1; BAB55179." evidence="9" ref="1">
    <original>Y</original>
    <variation>N</variation>
    <location>
        <position position="504"/>
    </location>
</feature>
<feature type="sequence conflict" description="In Ref. 1; BAB55179." evidence="9" ref="1">
    <original>K</original>
    <variation>E</variation>
    <location>
        <position position="667"/>
    </location>
</feature>
<keyword id="KW-0025">Alternative splicing</keyword>
<keyword id="KW-0209">Deafness</keyword>
<keyword id="KW-0256">Endoplasmic reticulum</keyword>
<keyword id="KW-0325">Glycoprotein</keyword>
<keyword id="KW-0472">Membrane</keyword>
<keyword id="KW-1010">Non-syndromic deafness</keyword>
<keyword id="KW-1267">Proteomics identification</keyword>
<keyword id="KW-1185">Reference proteome</keyword>
<keyword id="KW-0677">Repeat</keyword>
<keyword id="KW-0802">TPR repeat</keyword>
<keyword id="KW-0808">Transferase</keyword>
<keyword id="KW-0812">Transmembrane</keyword>
<keyword id="KW-1133">Transmembrane helix</keyword>
<evidence type="ECO:0000255" key="1"/>
<evidence type="ECO:0000255" key="2">
    <source>
        <dbReference type="PROSITE-ProRule" id="PRU00339"/>
    </source>
</evidence>
<evidence type="ECO:0000255" key="3">
    <source>
        <dbReference type="PROSITE-ProRule" id="PRU00498"/>
    </source>
</evidence>
<evidence type="ECO:0000269" key="4">
    <source>
    </source>
</evidence>
<evidence type="ECO:0000269" key="5">
    <source>
    </source>
</evidence>
<evidence type="ECO:0000269" key="6">
    <source>
    </source>
</evidence>
<evidence type="ECO:0000303" key="7">
    <source>
    </source>
</evidence>
<evidence type="ECO:0000303" key="8">
    <source>
    </source>
</evidence>
<evidence type="ECO:0000305" key="9"/>
<evidence type="ECO:0000312" key="10">
    <source>
        <dbReference type="HGNC" id="HGNC:25904"/>
    </source>
</evidence>
<organism>
    <name type="scientific">Homo sapiens</name>
    <name type="common">Human</name>
    <dbReference type="NCBI Taxonomy" id="9606"/>
    <lineage>
        <taxon>Eukaryota</taxon>
        <taxon>Metazoa</taxon>
        <taxon>Chordata</taxon>
        <taxon>Craniata</taxon>
        <taxon>Vertebrata</taxon>
        <taxon>Euteleostomi</taxon>
        <taxon>Mammalia</taxon>
        <taxon>Eutheria</taxon>
        <taxon>Euarchontoglires</taxon>
        <taxon>Primates</taxon>
        <taxon>Haplorrhini</taxon>
        <taxon>Catarrhini</taxon>
        <taxon>Hominidae</taxon>
        <taxon>Homo</taxon>
    </lineage>
</organism>
<dbReference type="EC" id="2.4.1.109" evidence="5"/>
<dbReference type="EMBL" id="AK056409">
    <property type="status" value="NOT_ANNOTATED_CDS"/>
    <property type="molecule type" value="mRNA"/>
</dbReference>
<dbReference type="EMBL" id="AK027530">
    <property type="protein sequence ID" value="BAB55179.1"/>
    <property type="status" value="ALT_INIT"/>
    <property type="molecule type" value="mRNA"/>
</dbReference>
<dbReference type="EMBL" id="AK299859">
    <property type="protein sequence ID" value="BAH13152.1"/>
    <property type="molecule type" value="mRNA"/>
</dbReference>
<dbReference type="EMBL" id="BX647956">
    <property type="status" value="NOT_ANNOTATED_CDS"/>
    <property type="molecule type" value="mRNA"/>
</dbReference>
<dbReference type="EMBL" id="AL359085">
    <property type="status" value="NOT_ANNOTATED_CDS"/>
    <property type="molecule type" value="Genomic_DNA"/>
</dbReference>
<dbReference type="EMBL" id="BC018707">
    <property type="protein sequence ID" value="AAH18707.1"/>
    <property type="status" value="ALT_INIT"/>
    <property type="molecule type" value="mRNA"/>
</dbReference>
<dbReference type="CCDS" id="CCDS41904.1">
    <molecule id="Q5T4D3-1"/>
</dbReference>
<dbReference type="CCDS" id="CCDS66575.1">
    <molecule id="Q5T4D3-4"/>
</dbReference>
<dbReference type="CCDS" id="CCDS9497.2">
    <molecule id="Q5T4D3-3"/>
</dbReference>
<dbReference type="RefSeq" id="NP_001073137.1">
    <molecule id="Q5T4D3-1"/>
    <property type="nucleotide sequence ID" value="NM_001079669.4"/>
</dbReference>
<dbReference type="RefSeq" id="NP_001273382.1">
    <molecule id="Q5T4D3-4"/>
    <property type="nucleotide sequence ID" value="NM_001286453.3"/>
</dbReference>
<dbReference type="RefSeq" id="NP_001337501.1">
    <molecule id="Q5T4D3-1"/>
    <property type="nucleotide sequence ID" value="NM_001350572.2"/>
</dbReference>
<dbReference type="RefSeq" id="NP_116202.2">
    <molecule id="Q5T4D3-3"/>
    <property type="nucleotide sequence ID" value="NM_032813.5"/>
</dbReference>
<dbReference type="RefSeq" id="XP_016876285.1">
    <property type="nucleotide sequence ID" value="XM_017020796.1"/>
</dbReference>
<dbReference type="RefSeq" id="XP_047286662.1">
    <molecule id="Q5T4D3-3"/>
    <property type="nucleotide sequence ID" value="XM_047430706.1"/>
</dbReference>
<dbReference type="SMR" id="Q5T4D3"/>
<dbReference type="BioGRID" id="124339">
    <property type="interactions" value="54"/>
</dbReference>
<dbReference type="FunCoup" id="Q5T4D3">
    <property type="interactions" value="1339"/>
</dbReference>
<dbReference type="IntAct" id="Q5T4D3">
    <property type="interactions" value="47"/>
</dbReference>
<dbReference type="STRING" id="9606.ENSP00000343871"/>
<dbReference type="GlyGen" id="Q5T4D3">
    <property type="glycosylation" value="3 sites, 7 N-linked glycans (3 sites)"/>
</dbReference>
<dbReference type="iPTMnet" id="Q5T4D3"/>
<dbReference type="PhosphoSitePlus" id="Q5T4D3"/>
<dbReference type="BioMuta" id="TMTC4"/>
<dbReference type="DMDM" id="134035049"/>
<dbReference type="jPOST" id="Q5T4D3"/>
<dbReference type="MassIVE" id="Q5T4D3"/>
<dbReference type="PaxDb" id="9606-ENSP00000343871"/>
<dbReference type="PeptideAtlas" id="Q5T4D3"/>
<dbReference type="ProteomicsDB" id="64449">
    <molecule id="Q5T4D3-1"/>
</dbReference>
<dbReference type="ProteomicsDB" id="64450">
    <molecule id="Q5T4D3-2"/>
</dbReference>
<dbReference type="ProteomicsDB" id="64451">
    <molecule id="Q5T4D3-3"/>
</dbReference>
<dbReference type="ProteomicsDB" id="6752"/>
<dbReference type="Antibodypedia" id="11042">
    <property type="antibodies" value="122 antibodies from 17 providers"/>
</dbReference>
<dbReference type="DNASU" id="84899"/>
<dbReference type="Ensembl" id="ENST00000328767.9">
    <molecule id="Q5T4D3-4"/>
    <property type="protein sequence ID" value="ENSP00000365409.2"/>
    <property type="gene ID" value="ENSG00000125247.16"/>
</dbReference>
<dbReference type="Ensembl" id="ENST00000342624.10">
    <molecule id="Q5T4D3-3"/>
    <property type="protein sequence ID" value="ENSP00000343871.5"/>
    <property type="gene ID" value="ENSG00000125247.16"/>
</dbReference>
<dbReference type="Ensembl" id="ENST00000376234.7">
    <molecule id="Q5T4D3-1"/>
    <property type="protein sequence ID" value="ENSP00000365408.3"/>
    <property type="gene ID" value="ENSG00000125247.16"/>
</dbReference>
<dbReference type="GeneID" id="84899"/>
<dbReference type="KEGG" id="hsa:84899"/>
<dbReference type="MANE-Select" id="ENST00000342624.10">
    <molecule id="Q5T4D3-3"/>
    <property type="protein sequence ID" value="ENSP00000343871.5"/>
    <property type="RefSeq nucleotide sequence ID" value="NM_032813.5"/>
    <property type="RefSeq protein sequence ID" value="NP_116202.2"/>
</dbReference>
<dbReference type="UCSC" id="uc001vot.5">
    <molecule id="Q5T4D3-1"/>
    <property type="organism name" value="human"/>
</dbReference>
<dbReference type="AGR" id="HGNC:25904"/>
<dbReference type="CTD" id="84899"/>
<dbReference type="DisGeNET" id="84899"/>
<dbReference type="GeneCards" id="TMTC4"/>
<dbReference type="HGNC" id="HGNC:25904">
    <property type="gene designation" value="TMTC4"/>
</dbReference>
<dbReference type="HPA" id="ENSG00000125247">
    <property type="expression patterns" value="Low tissue specificity"/>
</dbReference>
<dbReference type="MalaCards" id="TMTC4"/>
<dbReference type="MIM" id="618203">
    <property type="type" value="gene"/>
</dbReference>
<dbReference type="MIM" id="620714">
    <property type="type" value="phenotype"/>
</dbReference>
<dbReference type="neXtProt" id="NX_Q5T4D3"/>
<dbReference type="OpenTargets" id="ENSG00000125247"/>
<dbReference type="PharmGKB" id="PA142670721"/>
<dbReference type="VEuPathDB" id="HostDB:ENSG00000125247"/>
<dbReference type="eggNOG" id="KOG1124">
    <property type="taxonomic scope" value="Eukaryota"/>
</dbReference>
<dbReference type="GeneTree" id="ENSGT00940000158521"/>
<dbReference type="HOGENOM" id="CLU_011615_2_0_1"/>
<dbReference type="InParanoid" id="Q5T4D3"/>
<dbReference type="OMA" id="HWQHAVA"/>
<dbReference type="OrthoDB" id="19588at2759"/>
<dbReference type="PAN-GO" id="Q5T4D3">
    <property type="GO annotations" value="4 GO annotations based on evolutionary models"/>
</dbReference>
<dbReference type="PhylomeDB" id="Q5T4D3"/>
<dbReference type="TreeFam" id="TF328339"/>
<dbReference type="PathwayCommons" id="Q5T4D3"/>
<dbReference type="SignaLink" id="Q5T4D3"/>
<dbReference type="UniPathway" id="UPA00378"/>
<dbReference type="BioGRID-ORCS" id="84899">
    <property type="hits" value="14 hits in 1155 CRISPR screens"/>
</dbReference>
<dbReference type="ChiTaRS" id="TMTC4">
    <property type="organism name" value="human"/>
</dbReference>
<dbReference type="GeneWiki" id="TMTC4"/>
<dbReference type="GenomeRNAi" id="84899"/>
<dbReference type="Pharos" id="Q5T4D3">
    <property type="development level" value="Tdark"/>
</dbReference>
<dbReference type="PRO" id="PR:Q5T4D3"/>
<dbReference type="Proteomes" id="UP000005640">
    <property type="component" value="Chromosome 13"/>
</dbReference>
<dbReference type="RNAct" id="Q5T4D3">
    <property type="molecule type" value="protein"/>
</dbReference>
<dbReference type="Bgee" id="ENSG00000125247">
    <property type="expression patterns" value="Expressed in oviduct epithelium and 182 other cell types or tissues"/>
</dbReference>
<dbReference type="ExpressionAtlas" id="Q5T4D3">
    <property type="expression patterns" value="baseline and differential"/>
</dbReference>
<dbReference type="GO" id="GO:0005783">
    <property type="term" value="C:endoplasmic reticulum"/>
    <property type="evidence" value="ECO:0000314"/>
    <property type="project" value="MGI"/>
</dbReference>
<dbReference type="GO" id="GO:0016020">
    <property type="term" value="C:membrane"/>
    <property type="evidence" value="ECO:0007669"/>
    <property type="project" value="UniProtKB-SubCell"/>
</dbReference>
<dbReference type="GO" id="GO:0051117">
    <property type="term" value="F:ATPase binding"/>
    <property type="evidence" value="ECO:0000353"/>
    <property type="project" value="MGI"/>
</dbReference>
<dbReference type="GO" id="GO:0004169">
    <property type="term" value="F:dolichyl-phosphate-mannose-protein mannosyltransferase activity"/>
    <property type="evidence" value="ECO:0000315"/>
    <property type="project" value="UniProtKB"/>
</dbReference>
<dbReference type="GO" id="GO:0000030">
    <property type="term" value="F:mannosyltransferase activity"/>
    <property type="evidence" value="ECO:0000318"/>
    <property type="project" value="GO_Central"/>
</dbReference>
<dbReference type="GO" id="GO:0030968">
    <property type="term" value="P:endoplasmic reticulum unfolded protein response"/>
    <property type="evidence" value="ECO:0000318"/>
    <property type="project" value="GO_Central"/>
</dbReference>
<dbReference type="GO" id="GO:1905584">
    <property type="term" value="P:outer hair cell apoptotic process"/>
    <property type="evidence" value="ECO:0007669"/>
    <property type="project" value="Ensembl"/>
</dbReference>
<dbReference type="GO" id="GO:0032470">
    <property type="term" value="P:positive regulation of endoplasmic reticulum calcium ion concentration"/>
    <property type="evidence" value="ECO:0007669"/>
    <property type="project" value="Ensembl"/>
</dbReference>
<dbReference type="GO" id="GO:0035269">
    <property type="term" value="P:protein O-linked mannosylation"/>
    <property type="evidence" value="ECO:0000315"/>
    <property type="project" value="UniProtKB"/>
</dbReference>
<dbReference type="GO" id="GO:0007605">
    <property type="term" value="P:sensory perception of sound"/>
    <property type="evidence" value="ECO:0007669"/>
    <property type="project" value="Ensembl"/>
</dbReference>
<dbReference type="FunFam" id="1.25.40.10:FF:000456">
    <property type="entry name" value="transmembrane and TPR repeat-containing protein 4 isoform X2"/>
    <property type="match status" value="1"/>
</dbReference>
<dbReference type="Gene3D" id="1.25.40.10">
    <property type="entry name" value="Tetratricopeptide repeat domain"/>
    <property type="match status" value="3"/>
</dbReference>
<dbReference type="InterPro" id="IPR052346">
    <property type="entry name" value="O-mannosyl-transferase_TMTC"/>
</dbReference>
<dbReference type="InterPro" id="IPR013618">
    <property type="entry name" value="TMTC_DUF1736"/>
</dbReference>
<dbReference type="InterPro" id="IPR011990">
    <property type="entry name" value="TPR-like_helical_dom_sf"/>
</dbReference>
<dbReference type="InterPro" id="IPR019734">
    <property type="entry name" value="TPR_rpt"/>
</dbReference>
<dbReference type="PANTHER" id="PTHR44227">
    <property type="match status" value="1"/>
</dbReference>
<dbReference type="PANTHER" id="PTHR44227:SF3">
    <property type="entry name" value="PROTEIN O-MANNOSYL-TRANSFERASE TMTC4"/>
    <property type="match status" value="1"/>
</dbReference>
<dbReference type="Pfam" id="PF08409">
    <property type="entry name" value="TMTC_DUF1736"/>
    <property type="match status" value="1"/>
</dbReference>
<dbReference type="Pfam" id="PF13432">
    <property type="entry name" value="TPR_16"/>
    <property type="match status" value="2"/>
</dbReference>
<dbReference type="Pfam" id="PF13431">
    <property type="entry name" value="TPR_17"/>
    <property type="match status" value="1"/>
</dbReference>
<dbReference type="Pfam" id="PF13181">
    <property type="entry name" value="TPR_8"/>
    <property type="match status" value="1"/>
</dbReference>
<dbReference type="SMART" id="SM00028">
    <property type="entry name" value="TPR"/>
    <property type="match status" value="7"/>
</dbReference>
<dbReference type="SUPFAM" id="SSF48452">
    <property type="entry name" value="TPR-like"/>
    <property type="match status" value="1"/>
</dbReference>
<dbReference type="PROSITE" id="PS50005">
    <property type="entry name" value="TPR"/>
    <property type="match status" value="7"/>
</dbReference>
<dbReference type="PROSITE" id="PS50293">
    <property type="entry name" value="TPR_REGION"/>
    <property type="match status" value="3"/>
</dbReference>
<name>TMTC4_HUMAN</name>
<protein>
    <recommendedName>
        <fullName evidence="9">Protein O-mannosyl-transferase TMTC4</fullName>
        <ecNumber evidence="5">2.4.1.109</ecNumber>
    </recommendedName>
    <alternativeName>
        <fullName evidence="10">Transmembrane O-mannosyltransferase targeting cadherins 4</fullName>
    </alternativeName>
    <alternativeName>
        <fullName evidence="10">Transmembrane and tetratricopeptide repeat-containing 4</fullName>
    </alternativeName>
</protein>
<comment type="function">
    <text evidence="5">Transfers mannosyl residues to the hydroxyl group of serine or threonine residues. The 4 members of the TMTC family are O-mannosyl-transferases dedicated primarily to the cadherin superfamily, each member seems to have a distinct role in decorating the cadherin domains with O-linked mannose glycans at specific regions. Also acts as O-mannosyl-transferase on other proteins such as PDIA3.</text>
</comment>
<comment type="catalytic activity">
    <reaction evidence="5">
        <text>a di-trans,poly-cis-dolichyl beta-D-mannosyl phosphate + L-seryl-[protein] = 3-O-(alpha-D-mannosyl)-L-seryl-[protein] + a di-trans,poly-cis-dolichyl phosphate + H(+)</text>
        <dbReference type="Rhea" id="RHEA:17377"/>
        <dbReference type="Rhea" id="RHEA-COMP:9863"/>
        <dbReference type="Rhea" id="RHEA-COMP:13546"/>
        <dbReference type="Rhea" id="RHEA-COMP:19498"/>
        <dbReference type="Rhea" id="RHEA-COMP:19501"/>
        <dbReference type="ChEBI" id="CHEBI:15378"/>
        <dbReference type="ChEBI" id="CHEBI:29999"/>
        <dbReference type="ChEBI" id="CHEBI:57683"/>
        <dbReference type="ChEBI" id="CHEBI:58211"/>
        <dbReference type="ChEBI" id="CHEBI:137321"/>
        <dbReference type="EC" id="2.4.1.109"/>
    </reaction>
    <physiologicalReaction direction="left-to-right" evidence="5">
        <dbReference type="Rhea" id="RHEA:17378"/>
    </physiologicalReaction>
</comment>
<comment type="catalytic activity">
    <reaction evidence="5">
        <text>a di-trans,poly-cis-dolichyl beta-D-mannosyl phosphate + L-threonyl-[protein] = 3-O-(alpha-D-mannosyl)-L-threonyl-[protein] + a di-trans,poly-cis-dolichyl phosphate + H(+)</text>
        <dbReference type="Rhea" id="RHEA:53396"/>
        <dbReference type="Rhea" id="RHEA-COMP:11060"/>
        <dbReference type="Rhea" id="RHEA-COMP:13547"/>
        <dbReference type="Rhea" id="RHEA-COMP:19498"/>
        <dbReference type="Rhea" id="RHEA-COMP:19501"/>
        <dbReference type="ChEBI" id="CHEBI:15378"/>
        <dbReference type="ChEBI" id="CHEBI:30013"/>
        <dbReference type="ChEBI" id="CHEBI:57683"/>
        <dbReference type="ChEBI" id="CHEBI:58211"/>
        <dbReference type="ChEBI" id="CHEBI:137323"/>
        <dbReference type="EC" id="2.4.1.109"/>
    </reaction>
    <physiologicalReaction direction="left-to-right" evidence="5">
        <dbReference type="Rhea" id="RHEA:53397"/>
    </physiologicalReaction>
</comment>
<comment type="pathway">
    <text evidence="5">Protein modification; protein glycosylation.</text>
</comment>
<comment type="subcellular location">
    <subcellularLocation>
        <location evidence="1">Membrane</location>
        <topology evidence="1">Multi-pass membrane protein</topology>
    </subcellularLocation>
    <subcellularLocation>
        <location evidence="9">Endoplasmic reticulum</location>
    </subcellularLocation>
</comment>
<comment type="alternative products">
    <event type="alternative splicing"/>
    <isoform>
        <id>Q5T4D3-1</id>
        <name>1</name>
        <sequence type="displayed"/>
    </isoform>
    <isoform>
        <id>Q5T4D3-2</id>
        <name>2</name>
        <sequence type="described" ref="VSP_023622 VSP_023623"/>
    </isoform>
    <isoform>
        <id>Q5T4D3-3</id>
        <name>3</name>
        <sequence type="described" ref="VSP_038261"/>
    </isoform>
    <isoform>
        <id>Q5T4D3-4</id>
        <name>4</name>
        <sequence type="described" ref="VSP_054873"/>
    </isoform>
</comment>
<comment type="disease" evidence="6">
    <disease id="DI-06846">
        <name>Deafness, autosomal recessive, 122</name>
        <acronym>DFNB122</acronym>
        <description>A form of non-syndromic deafness characterized by adult-onset progressive, sensorineural hearing loss. Sensorineural hearing loss results from damage to the neural receptors of the inner ear, the nerve pathways to the brain, or the area of the brain that receives sound information.</description>
        <dbReference type="MIM" id="620714"/>
    </disease>
    <text>The disease may be caused by variants affecting the gene represented in this entry.</text>
</comment>
<comment type="similarity">
    <text evidence="9">Belongs to the TMTC family.</text>
</comment>
<comment type="sequence caution" evidence="9">
    <conflict type="erroneous initiation">
        <sequence resource="EMBL-CDS" id="AAH18707"/>
    </conflict>
    <text>Truncated N-terminus.</text>
</comment>
<comment type="sequence caution" evidence="9">
    <conflict type="frameshift">
        <sequence resource="EMBL" id="AK056409"/>
    </conflict>
</comment>
<comment type="sequence caution" evidence="9">
    <conflict type="erroneous initiation">
        <sequence resource="EMBL-CDS" id="BAB55179"/>
    </conflict>
    <text>Truncated N-terminus.</text>
</comment>
<sequence>MAVLDTDLDHILPSSVLPPFWAKLVVGSVAIVCFARSYDGDFVFDDSEAIVNNKDLQAETPLGDLWHHDFWGSRLSSNTSHKSYRPLTVLTFRINYYLSGGFHPVGFHVVNILLHSGISVLMVDVFSVLFGGLQYTSKGRRLHLAPRASLLAALLFAVHPVHTECVAGVVGRADLLCALFFLLSFLGYCKAFRESNKEGAHSSTFWVLLSIFLGAVAMLCKEQGITVLGLNAVFDILVIGKFNVLEIVQKVLHKDKSLENLGMLRNGGLLFRMTLLTSGGAGMLYVRWRIMGTGPPAFTEVDNPASFADSMLVRAVNYNYYYSLNAWLLLCPWWLCFDWSMGCIPLIKSISDWRVIALAALWFCLIGLICQALCSEDGHKRRILTLGLGFLVIPFLPASNLFFRVGFVVAERVLYLPSVGYCVLLTFGFGALSKHTKKKKLIAAVVLGILFINTLRCVLRSGEWRSEEQLFRSALSVCPLNAKVHYNIGKNLADKGNQTAAIRYYREAVRLNPKYVHAMNNLGNILKERNELQEAEELLSLAVQIQPDFAAAWMNLGIVQNSLKRFEAAEQSYRTAIKHRRKYPDCYYNLGRLYADLNRHVDALNAWRNATVLKPEHSLAWNNMIILLDNTGNLAQAEAVGREALELIPNDHSLMFSLANVLGKSQKYKESEALFLKAIKANPNAASYHGNLAVLYHRWGHLDLAKKHYEISLQLDPTASGTKENYGLLRRKLELMQKKAV</sequence>
<reference key="1">
    <citation type="journal article" date="2004" name="Nat. Genet.">
        <title>Complete sequencing and characterization of 21,243 full-length human cDNAs.</title>
        <authorList>
            <person name="Ota T."/>
            <person name="Suzuki Y."/>
            <person name="Nishikawa T."/>
            <person name="Otsuki T."/>
            <person name="Sugiyama T."/>
            <person name="Irie R."/>
            <person name="Wakamatsu A."/>
            <person name="Hayashi K."/>
            <person name="Sato H."/>
            <person name="Nagai K."/>
            <person name="Kimura K."/>
            <person name="Makita H."/>
            <person name="Sekine M."/>
            <person name="Obayashi M."/>
            <person name="Nishi T."/>
            <person name="Shibahara T."/>
            <person name="Tanaka T."/>
            <person name="Ishii S."/>
            <person name="Yamamoto J."/>
            <person name="Saito K."/>
            <person name="Kawai Y."/>
            <person name="Isono Y."/>
            <person name="Nakamura Y."/>
            <person name="Nagahari K."/>
            <person name="Murakami K."/>
            <person name="Yasuda T."/>
            <person name="Iwayanagi T."/>
            <person name="Wagatsuma M."/>
            <person name="Shiratori A."/>
            <person name="Sudo H."/>
            <person name="Hosoiri T."/>
            <person name="Kaku Y."/>
            <person name="Kodaira H."/>
            <person name="Kondo H."/>
            <person name="Sugawara M."/>
            <person name="Takahashi M."/>
            <person name="Kanda K."/>
            <person name="Yokoi T."/>
            <person name="Furuya T."/>
            <person name="Kikkawa E."/>
            <person name="Omura Y."/>
            <person name="Abe K."/>
            <person name="Kamihara K."/>
            <person name="Katsuta N."/>
            <person name="Sato K."/>
            <person name="Tanikawa M."/>
            <person name="Yamazaki M."/>
            <person name="Ninomiya K."/>
            <person name="Ishibashi T."/>
            <person name="Yamashita H."/>
            <person name="Murakawa K."/>
            <person name="Fujimori K."/>
            <person name="Tanai H."/>
            <person name="Kimata M."/>
            <person name="Watanabe M."/>
            <person name="Hiraoka S."/>
            <person name="Chiba Y."/>
            <person name="Ishida S."/>
            <person name="Ono Y."/>
            <person name="Takiguchi S."/>
            <person name="Watanabe S."/>
            <person name="Yosida M."/>
            <person name="Hotuta T."/>
            <person name="Kusano J."/>
            <person name="Kanehori K."/>
            <person name="Takahashi-Fujii A."/>
            <person name="Hara H."/>
            <person name="Tanase T.-O."/>
            <person name="Nomura Y."/>
            <person name="Togiya S."/>
            <person name="Komai F."/>
            <person name="Hara R."/>
            <person name="Takeuchi K."/>
            <person name="Arita M."/>
            <person name="Imose N."/>
            <person name="Musashino K."/>
            <person name="Yuuki H."/>
            <person name="Oshima A."/>
            <person name="Sasaki N."/>
            <person name="Aotsuka S."/>
            <person name="Yoshikawa Y."/>
            <person name="Matsunawa H."/>
            <person name="Ichihara T."/>
            <person name="Shiohata N."/>
            <person name="Sano S."/>
            <person name="Moriya S."/>
            <person name="Momiyama H."/>
            <person name="Satoh N."/>
            <person name="Takami S."/>
            <person name="Terashima Y."/>
            <person name="Suzuki O."/>
            <person name="Nakagawa S."/>
            <person name="Senoh A."/>
            <person name="Mizoguchi H."/>
            <person name="Goto Y."/>
            <person name="Shimizu F."/>
            <person name="Wakebe H."/>
            <person name="Hishigaki H."/>
            <person name="Watanabe T."/>
            <person name="Sugiyama A."/>
            <person name="Takemoto M."/>
            <person name="Kawakami B."/>
            <person name="Yamazaki M."/>
            <person name="Watanabe K."/>
            <person name="Kumagai A."/>
            <person name="Itakura S."/>
            <person name="Fukuzumi Y."/>
            <person name="Fujimori Y."/>
            <person name="Komiyama M."/>
            <person name="Tashiro H."/>
            <person name="Tanigami A."/>
            <person name="Fujiwara T."/>
            <person name="Ono T."/>
            <person name="Yamada K."/>
            <person name="Fujii Y."/>
            <person name="Ozaki K."/>
            <person name="Hirao M."/>
            <person name="Ohmori Y."/>
            <person name="Kawabata A."/>
            <person name="Hikiji T."/>
            <person name="Kobatake N."/>
            <person name="Inagaki H."/>
            <person name="Ikema Y."/>
            <person name="Okamoto S."/>
            <person name="Okitani R."/>
            <person name="Kawakami T."/>
            <person name="Noguchi S."/>
            <person name="Itoh T."/>
            <person name="Shigeta K."/>
            <person name="Senba T."/>
            <person name="Matsumura K."/>
            <person name="Nakajima Y."/>
            <person name="Mizuno T."/>
            <person name="Morinaga M."/>
            <person name="Sasaki M."/>
            <person name="Togashi T."/>
            <person name="Oyama M."/>
            <person name="Hata H."/>
            <person name="Watanabe M."/>
            <person name="Komatsu T."/>
            <person name="Mizushima-Sugano J."/>
            <person name="Satoh T."/>
            <person name="Shirai Y."/>
            <person name="Takahashi Y."/>
            <person name="Nakagawa K."/>
            <person name="Okumura K."/>
            <person name="Nagase T."/>
            <person name="Nomura N."/>
            <person name="Kikuchi H."/>
            <person name="Masuho Y."/>
            <person name="Yamashita R."/>
            <person name="Nakai K."/>
            <person name="Yada T."/>
            <person name="Nakamura Y."/>
            <person name="Ohara O."/>
            <person name="Isogai T."/>
            <person name="Sugano S."/>
        </authorList>
    </citation>
    <scope>NUCLEOTIDE SEQUENCE [LARGE SCALE MRNA] (ISOFORMS 3 AND 4)</scope>
    <scope>NUCLEOTIDE SEQUENCE [LARGE SCALE MRNA] OF 222-741 (ISOFORM 1)</scope>
    <source>
        <tissue>Brain</tissue>
        <tissue>Teratocarcinoma</tissue>
    </source>
</reference>
<reference key="2">
    <citation type="journal article" date="2007" name="BMC Genomics">
        <title>The full-ORF clone resource of the German cDNA consortium.</title>
        <authorList>
            <person name="Bechtel S."/>
            <person name="Rosenfelder H."/>
            <person name="Duda A."/>
            <person name="Schmidt C.P."/>
            <person name="Ernst U."/>
            <person name="Wellenreuther R."/>
            <person name="Mehrle A."/>
            <person name="Schuster C."/>
            <person name="Bahr A."/>
            <person name="Bloecker H."/>
            <person name="Heubner D."/>
            <person name="Hoerlein A."/>
            <person name="Michel G."/>
            <person name="Wedler H."/>
            <person name="Koehrer K."/>
            <person name="Ottenwaelder B."/>
            <person name="Poustka A."/>
            <person name="Wiemann S."/>
            <person name="Schupp I."/>
        </authorList>
    </citation>
    <scope>NUCLEOTIDE SEQUENCE [LARGE SCALE MRNA] (ISOFORM 1)</scope>
    <source>
        <tissue>Endometrial adenocarcinoma</tissue>
    </source>
</reference>
<reference key="3">
    <citation type="journal article" date="2004" name="Nature">
        <title>The DNA sequence and analysis of human chromosome 13.</title>
        <authorList>
            <person name="Dunham A."/>
            <person name="Matthews L.H."/>
            <person name="Burton J."/>
            <person name="Ashurst J.L."/>
            <person name="Howe K.L."/>
            <person name="Ashcroft K.J."/>
            <person name="Beare D.M."/>
            <person name="Burford D.C."/>
            <person name="Hunt S.E."/>
            <person name="Griffiths-Jones S."/>
            <person name="Jones M.C."/>
            <person name="Keenan S.J."/>
            <person name="Oliver K."/>
            <person name="Scott C.E."/>
            <person name="Ainscough R."/>
            <person name="Almeida J.P."/>
            <person name="Ambrose K.D."/>
            <person name="Andrews D.T."/>
            <person name="Ashwell R.I.S."/>
            <person name="Babbage A.K."/>
            <person name="Bagguley C.L."/>
            <person name="Bailey J."/>
            <person name="Bannerjee R."/>
            <person name="Barlow K.F."/>
            <person name="Bates K."/>
            <person name="Beasley H."/>
            <person name="Bird C.P."/>
            <person name="Bray-Allen S."/>
            <person name="Brown A.J."/>
            <person name="Brown J.Y."/>
            <person name="Burrill W."/>
            <person name="Carder C."/>
            <person name="Carter N.P."/>
            <person name="Chapman J.C."/>
            <person name="Clamp M.E."/>
            <person name="Clark S.Y."/>
            <person name="Clarke G."/>
            <person name="Clee C.M."/>
            <person name="Clegg S.C."/>
            <person name="Cobley V."/>
            <person name="Collins J.E."/>
            <person name="Corby N."/>
            <person name="Coville G.J."/>
            <person name="Deloukas P."/>
            <person name="Dhami P."/>
            <person name="Dunham I."/>
            <person name="Dunn M."/>
            <person name="Earthrowl M.E."/>
            <person name="Ellington A.G."/>
            <person name="Faulkner L."/>
            <person name="Frankish A.G."/>
            <person name="Frankland J."/>
            <person name="French L."/>
            <person name="Garner P."/>
            <person name="Garnett J."/>
            <person name="Gilbert J.G.R."/>
            <person name="Gilson C.J."/>
            <person name="Ghori J."/>
            <person name="Grafham D.V."/>
            <person name="Gribble S.M."/>
            <person name="Griffiths C."/>
            <person name="Hall R.E."/>
            <person name="Hammond S."/>
            <person name="Harley J.L."/>
            <person name="Hart E.A."/>
            <person name="Heath P.D."/>
            <person name="Howden P.J."/>
            <person name="Huckle E.J."/>
            <person name="Hunt P.J."/>
            <person name="Hunt A.R."/>
            <person name="Johnson C."/>
            <person name="Johnson D."/>
            <person name="Kay M."/>
            <person name="Kimberley A.M."/>
            <person name="King A."/>
            <person name="Laird G.K."/>
            <person name="Langford C.J."/>
            <person name="Lawlor S."/>
            <person name="Leongamornlert D.A."/>
            <person name="Lloyd D.M."/>
            <person name="Lloyd C."/>
            <person name="Loveland J.E."/>
            <person name="Lovell J."/>
            <person name="Martin S."/>
            <person name="Mashreghi-Mohammadi M."/>
            <person name="McLaren S.J."/>
            <person name="McMurray A."/>
            <person name="Milne S."/>
            <person name="Moore M.J.F."/>
            <person name="Nickerson T."/>
            <person name="Palmer S.A."/>
            <person name="Pearce A.V."/>
            <person name="Peck A.I."/>
            <person name="Pelan S."/>
            <person name="Phillimore B."/>
            <person name="Porter K.M."/>
            <person name="Rice C.M."/>
            <person name="Searle S."/>
            <person name="Sehra H.K."/>
            <person name="Shownkeen R."/>
            <person name="Skuce C.D."/>
            <person name="Smith M."/>
            <person name="Steward C.A."/>
            <person name="Sycamore N."/>
            <person name="Tester J."/>
            <person name="Thomas D.W."/>
            <person name="Tracey A."/>
            <person name="Tromans A."/>
            <person name="Tubby B."/>
            <person name="Wall M."/>
            <person name="Wallis J.M."/>
            <person name="West A.P."/>
            <person name="Whitehead S.L."/>
            <person name="Willey D.L."/>
            <person name="Wilming L."/>
            <person name="Wray P.W."/>
            <person name="Wright M.W."/>
            <person name="Young L."/>
            <person name="Coulson A."/>
            <person name="Durbin R.M."/>
            <person name="Hubbard T."/>
            <person name="Sulston J.E."/>
            <person name="Beck S."/>
            <person name="Bentley D.R."/>
            <person name="Rogers J."/>
            <person name="Ross M.T."/>
        </authorList>
    </citation>
    <scope>NUCLEOTIDE SEQUENCE [LARGE SCALE GENOMIC DNA]</scope>
</reference>
<reference key="4">
    <citation type="journal article" date="2004" name="Genome Res.">
        <title>The status, quality, and expansion of the NIH full-length cDNA project: the Mammalian Gene Collection (MGC).</title>
        <authorList>
            <consortium name="The MGC Project Team"/>
        </authorList>
    </citation>
    <scope>NUCLEOTIDE SEQUENCE [LARGE SCALE MRNA] OF 196-741 (ISOFORM 2)</scope>
    <source>
        <tissue>Skin</tissue>
    </source>
</reference>
<reference key="5">
    <citation type="journal article" date="2017" name="Proc. Natl. Acad. Sci. U.S.A.">
        <title>Discovery of an O-mannosylation pathway selectively serving cadherins and protocadherins.</title>
        <authorList>
            <person name="Larsen I.S.B."/>
            <person name="Narimatsu Y."/>
            <person name="Joshi H.J."/>
            <person name="Siukstaite L."/>
            <person name="Harrison O.J."/>
            <person name="Brasch J."/>
            <person name="Goodman K.M."/>
            <person name="Hansen L."/>
            <person name="Shapiro L."/>
            <person name="Honig B."/>
            <person name="Vakhrushev S.Y."/>
            <person name="Clausen H."/>
            <person name="Halim A."/>
        </authorList>
    </citation>
    <scope>FUNCTION</scope>
    <scope>CATALYTIC ACTIVITY</scope>
    <scope>PATHWAY</scope>
</reference>
<reference key="6">
    <citation type="journal article" date="2006" name="Science">
        <title>The consensus coding sequences of human breast and colorectal cancers.</title>
        <authorList>
            <person name="Sjoeblom T."/>
            <person name="Jones S."/>
            <person name="Wood L.D."/>
            <person name="Parsons D.W."/>
            <person name="Lin J."/>
            <person name="Barber T.D."/>
            <person name="Mandelker D."/>
            <person name="Leary R.J."/>
            <person name="Ptak J."/>
            <person name="Silliman N."/>
            <person name="Szabo S."/>
            <person name="Buckhaults P."/>
            <person name="Farrell C."/>
            <person name="Meeh P."/>
            <person name="Markowitz S.D."/>
            <person name="Willis J."/>
            <person name="Dawson D."/>
            <person name="Willson J.K.V."/>
            <person name="Gazdar A.F."/>
            <person name="Hartigan J."/>
            <person name="Wu L."/>
            <person name="Liu C."/>
            <person name="Parmigiani G."/>
            <person name="Park B.H."/>
            <person name="Bachman K.E."/>
            <person name="Papadopoulos N."/>
            <person name="Vogelstein B."/>
            <person name="Kinzler K.W."/>
            <person name="Velculescu V.E."/>
        </authorList>
    </citation>
    <scope>VARIANT [LARGE SCALE ANALYSIS] VAL-655</scope>
</reference>
<reference key="7">
    <citation type="journal article" date="2023" name="JCI Insight">
        <title>TMTC4 is a hair cell-specific human deafness gene.</title>
        <authorList>
            <person name="Li J."/>
            <person name="Choi B.Y."/>
            <person name="Eltawil Y."/>
            <person name="Ismail Mohamad N."/>
            <person name="Park Y."/>
            <person name="Matthews I.R."/>
            <person name="Han J.H."/>
            <person name="Kim B.J."/>
            <person name="Sherr E.H."/>
            <person name="Chan D.K."/>
        </authorList>
    </citation>
    <scope>VARIANTS DFNB122 LYS-164 AND VAL-173</scope>
    <scope>INVOLVEMENT IN DFNB122</scope>
</reference>
<gene>
    <name evidence="10" type="primary">TMTC4</name>
</gene>